<name>LFTR_LEGPA</name>
<proteinExistence type="inferred from homology"/>
<organism>
    <name type="scientific">Legionella pneumophila (strain Paris)</name>
    <dbReference type="NCBI Taxonomy" id="297246"/>
    <lineage>
        <taxon>Bacteria</taxon>
        <taxon>Pseudomonadati</taxon>
        <taxon>Pseudomonadota</taxon>
        <taxon>Gammaproteobacteria</taxon>
        <taxon>Legionellales</taxon>
        <taxon>Legionellaceae</taxon>
        <taxon>Legionella</taxon>
    </lineage>
</organism>
<gene>
    <name evidence="1" type="primary">aat</name>
    <name type="ordered locus">lpp1732</name>
</gene>
<accession>Q5X4E4</accession>
<reference key="1">
    <citation type="journal article" date="2004" name="Nat. Genet.">
        <title>Evidence in the Legionella pneumophila genome for exploitation of host cell functions and high genome plasticity.</title>
        <authorList>
            <person name="Cazalet C."/>
            <person name="Rusniok C."/>
            <person name="Brueggemann H."/>
            <person name="Zidane N."/>
            <person name="Magnier A."/>
            <person name="Ma L."/>
            <person name="Tichit M."/>
            <person name="Jarraud S."/>
            <person name="Bouchier C."/>
            <person name="Vandenesch F."/>
            <person name="Kunst F."/>
            <person name="Etienne J."/>
            <person name="Glaser P."/>
            <person name="Buchrieser C."/>
        </authorList>
    </citation>
    <scope>NUCLEOTIDE SEQUENCE [LARGE SCALE GENOMIC DNA]</scope>
    <source>
        <strain>Paris</strain>
    </source>
</reference>
<evidence type="ECO:0000255" key="1">
    <source>
        <dbReference type="HAMAP-Rule" id="MF_00688"/>
    </source>
</evidence>
<keyword id="KW-0012">Acyltransferase</keyword>
<keyword id="KW-0963">Cytoplasm</keyword>
<keyword id="KW-0808">Transferase</keyword>
<feature type="chain" id="PRO_0000207223" description="Leucyl/phenylalanyl-tRNA--protein transferase">
    <location>
        <begin position="1"/>
        <end position="222"/>
    </location>
</feature>
<dbReference type="EC" id="2.3.2.6" evidence="1"/>
<dbReference type="EMBL" id="CR628336">
    <property type="protein sequence ID" value="CAH12884.1"/>
    <property type="molecule type" value="Genomic_DNA"/>
</dbReference>
<dbReference type="RefSeq" id="WP_011214032.1">
    <property type="nucleotide sequence ID" value="NC_006368.1"/>
</dbReference>
<dbReference type="SMR" id="Q5X4E4"/>
<dbReference type="KEGG" id="lpp:lpp1732"/>
<dbReference type="LegioList" id="lpp1732"/>
<dbReference type="HOGENOM" id="CLU_075045_0_0_6"/>
<dbReference type="GO" id="GO:0005737">
    <property type="term" value="C:cytoplasm"/>
    <property type="evidence" value="ECO:0007669"/>
    <property type="project" value="UniProtKB-SubCell"/>
</dbReference>
<dbReference type="GO" id="GO:0008914">
    <property type="term" value="F:leucyl-tRNA--protein transferase activity"/>
    <property type="evidence" value="ECO:0007669"/>
    <property type="project" value="UniProtKB-UniRule"/>
</dbReference>
<dbReference type="GO" id="GO:0030163">
    <property type="term" value="P:protein catabolic process"/>
    <property type="evidence" value="ECO:0007669"/>
    <property type="project" value="UniProtKB-UniRule"/>
</dbReference>
<dbReference type="FunFam" id="3.30.70.3550:FF:000001">
    <property type="entry name" value="Leucyl/phenylalanyl-tRNA--protein transferase"/>
    <property type="match status" value="1"/>
</dbReference>
<dbReference type="FunFam" id="3.40.630.70:FF:000001">
    <property type="entry name" value="Leucyl/phenylalanyl-tRNA--protein transferase"/>
    <property type="match status" value="1"/>
</dbReference>
<dbReference type="Gene3D" id="3.40.630.70">
    <property type="entry name" value="Leucyl/phenylalanyl-tRNA-protein transferase, C-terminal domain"/>
    <property type="match status" value="1"/>
</dbReference>
<dbReference type="Gene3D" id="3.30.70.3550">
    <property type="entry name" value="Leucyl/phenylalanyl-tRNA-protein transferase, N-terminal domain"/>
    <property type="match status" value="1"/>
</dbReference>
<dbReference type="HAMAP" id="MF_00688">
    <property type="entry name" value="Leu_Phe_trans"/>
    <property type="match status" value="1"/>
</dbReference>
<dbReference type="InterPro" id="IPR016181">
    <property type="entry name" value="Acyl_CoA_acyltransferase"/>
</dbReference>
<dbReference type="InterPro" id="IPR004616">
    <property type="entry name" value="Leu/Phe-tRNA_Trfase"/>
</dbReference>
<dbReference type="InterPro" id="IPR042203">
    <property type="entry name" value="Leu/Phe-tRNA_Trfase_C"/>
</dbReference>
<dbReference type="InterPro" id="IPR042221">
    <property type="entry name" value="Leu/Phe-tRNA_Trfase_N"/>
</dbReference>
<dbReference type="NCBIfam" id="TIGR00667">
    <property type="entry name" value="aat"/>
    <property type="match status" value="1"/>
</dbReference>
<dbReference type="PANTHER" id="PTHR30098">
    <property type="entry name" value="LEUCYL/PHENYLALANYL-TRNA--PROTEIN TRANSFERASE"/>
    <property type="match status" value="1"/>
</dbReference>
<dbReference type="PANTHER" id="PTHR30098:SF2">
    <property type="entry name" value="LEUCYL_PHENYLALANYL-TRNA--PROTEIN TRANSFERASE"/>
    <property type="match status" value="1"/>
</dbReference>
<dbReference type="Pfam" id="PF03588">
    <property type="entry name" value="Leu_Phe_trans"/>
    <property type="match status" value="1"/>
</dbReference>
<dbReference type="SUPFAM" id="SSF55729">
    <property type="entry name" value="Acyl-CoA N-acyltransferases (Nat)"/>
    <property type="match status" value="1"/>
</dbReference>
<protein>
    <recommendedName>
        <fullName evidence="1">Leucyl/phenylalanyl-tRNA--protein transferase</fullName>
        <ecNumber evidence="1">2.3.2.6</ecNumber>
    </recommendedName>
    <alternativeName>
        <fullName evidence="1">L/F-transferase</fullName>
    </alternativeName>
    <alternativeName>
        <fullName evidence="1">Leucyltransferase</fullName>
    </alternativeName>
    <alternativeName>
        <fullName evidence="1">Phenyalanyltransferase</fullName>
    </alternativeName>
</protein>
<sequence>MAYDSDYTFPDPETSDKQGLLAIGGVLTPKRVLQAYSQGIFPWYEPGNPVLWWSPNPRLILIPNEFKISRSLKKTLKKPFKLTVDTAFQRVISYCATCSDRTNKTWITSEMIETYTQLHEMGYAHSFEIWDGSELVGGLYGISLGHAFFGESMFHTITDASKVALHFLCSIMQSWNFDFIDCQLPTLHLMRLGAKIISRKEFLHMLQETLKYPDKKGNWSVD</sequence>
<comment type="function">
    <text evidence="1">Functions in the N-end rule pathway of protein degradation where it conjugates Leu, Phe and, less efficiently, Met from aminoacyl-tRNAs to the N-termini of proteins containing an N-terminal arginine or lysine.</text>
</comment>
<comment type="catalytic activity">
    <reaction evidence="1">
        <text>N-terminal L-lysyl-[protein] + L-leucyl-tRNA(Leu) = N-terminal L-leucyl-L-lysyl-[protein] + tRNA(Leu) + H(+)</text>
        <dbReference type="Rhea" id="RHEA:12340"/>
        <dbReference type="Rhea" id="RHEA-COMP:9613"/>
        <dbReference type="Rhea" id="RHEA-COMP:9622"/>
        <dbReference type="Rhea" id="RHEA-COMP:12670"/>
        <dbReference type="Rhea" id="RHEA-COMP:12671"/>
        <dbReference type="ChEBI" id="CHEBI:15378"/>
        <dbReference type="ChEBI" id="CHEBI:65249"/>
        <dbReference type="ChEBI" id="CHEBI:78442"/>
        <dbReference type="ChEBI" id="CHEBI:78494"/>
        <dbReference type="ChEBI" id="CHEBI:133043"/>
        <dbReference type="EC" id="2.3.2.6"/>
    </reaction>
</comment>
<comment type="catalytic activity">
    <reaction evidence="1">
        <text>N-terminal L-arginyl-[protein] + L-leucyl-tRNA(Leu) = N-terminal L-leucyl-L-arginyl-[protein] + tRNA(Leu) + H(+)</text>
        <dbReference type="Rhea" id="RHEA:50416"/>
        <dbReference type="Rhea" id="RHEA-COMP:9613"/>
        <dbReference type="Rhea" id="RHEA-COMP:9622"/>
        <dbReference type="Rhea" id="RHEA-COMP:12672"/>
        <dbReference type="Rhea" id="RHEA-COMP:12673"/>
        <dbReference type="ChEBI" id="CHEBI:15378"/>
        <dbReference type="ChEBI" id="CHEBI:64719"/>
        <dbReference type="ChEBI" id="CHEBI:78442"/>
        <dbReference type="ChEBI" id="CHEBI:78494"/>
        <dbReference type="ChEBI" id="CHEBI:133044"/>
        <dbReference type="EC" id="2.3.2.6"/>
    </reaction>
</comment>
<comment type="catalytic activity">
    <reaction evidence="1">
        <text>L-phenylalanyl-tRNA(Phe) + an N-terminal L-alpha-aminoacyl-[protein] = an N-terminal L-phenylalanyl-L-alpha-aminoacyl-[protein] + tRNA(Phe)</text>
        <dbReference type="Rhea" id="RHEA:43632"/>
        <dbReference type="Rhea" id="RHEA-COMP:9668"/>
        <dbReference type="Rhea" id="RHEA-COMP:9699"/>
        <dbReference type="Rhea" id="RHEA-COMP:10636"/>
        <dbReference type="Rhea" id="RHEA-COMP:10637"/>
        <dbReference type="ChEBI" id="CHEBI:78442"/>
        <dbReference type="ChEBI" id="CHEBI:78531"/>
        <dbReference type="ChEBI" id="CHEBI:78597"/>
        <dbReference type="ChEBI" id="CHEBI:83561"/>
        <dbReference type="EC" id="2.3.2.6"/>
    </reaction>
</comment>
<comment type="subcellular location">
    <subcellularLocation>
        <location evidence="1">Cytoplasm</location>
    </subcellularLocation>
</comment>
<comment type="similarity">
    <text evidence="1">Belongs to the L/F-transferase family.</text>
</comment>